<name>RR8_PHYPA</name>
<feature type="chain" id="PRO_0000126588" description="Small ribosomal subunit protein uS8c">
    <location>
        <begin position="1"/>
        <end position="132"/>
    </location>
</feature>
<accession>Q6YXL1</accession>
<keyword id="KW-0150">Chloroplast</keyword>
<keyword id="KW-0934">Plastid</keyword>
<keyword id="KW-1185">Reference proteome</keyword>
<keyword id="KW-0687">Ribonucleoprotein</keyword>
<keyword id="KW-0689">Ribosomal protein</keyword>
<keyword id="KW-0694">RNA-binding</keyword>
<keyword id="KW-0699">rRNA-binding</keyword>
<proteinExistence type="inferred from homology"/>
<reference key="1">
    <citation type="journal article" date="2003" name="Nucleic Acids Res.">
        <title>Complete chloroplast DNA sequence of the moss Physcomitrella patens: evidence for the loss and relocation of rpoA from the chloroplast to the nucleus.</title>
        <authorList>
            <person name="Sugiura C."/>
            <person name="Kobayashi Y."/>
            <person name="Setsuyuki A."/>
            <person name="Sugita C."/>
            <person name="Sugita M."/>
        </authorList>
    </citation>
    <scope>NUCLEOTIDE SEQUENCE [LARGE SCALE GENOMIC DNA]</scope>
    <source>
        <strain>cv. Gransden 2004</strain>
    </source>
</reference>
<dbReference type="EMBL" id="AP005672">
    <property type="protein sequence ID" value="BAC85077.1"/>
    <property type="molecule type" value="Genomic_DNA"/>
</dbReference>
<dbReference type="RefSeq" id="NP_904227.1">
    <property type="nucleotide sequence ID" value="NC_005087.2"/>
</dbReference>
<dbReference type="RefSeq" id="YP_009477557.1">
    <property type="nucleotide sequence ID" value="NC_037465.1"/>
</dbReference>
<dbReference type="SMR" id="Q6YXL1"/>
<dbReference type="FunCoup" id="Q6YXL1">
    <property type="interactions" value="252"/>
</dbReference>
<dbReference type="STRING" id="3218.Q6YXL1"/>
<dbReference type="GeneID" id="2546779"/>
<dbReference type="GeneID" id="36487191"/>
<dbReference type="KEGG" id="ppp:2546779"/>
<dbReference type="InParanoid" id="Q6YXL1"/>
<dbReference type="OrthoDB" id="409928at2759"/>
<dbReference type="Proteomes" id="UP000006727">
    <property type="component" value="Chloroplast"/>
</dbReference>
<dbReference type="GO" id="GO:0009507">
    <property type="term" value="C:chloroplast"/>
    <property type="evidence" value="ECO:0007669"/>
    <property type="project" value="UniProtKB-SubCell"/>
</dbReference>
<dbReference type="GO" id="GO:1990904">
    <property type="term" value="C:ribonucleoprotein complex"/>
    <property type="evidence" value="ECO:0007669"/>
    <property type="project" value="UniProtKB-KW"/>
</dbReference>
<dbReference type="GO" id="GO:0005840">
    <property type="term" value="C:ribosome"/>
    <property type="evidence" value="ECO:0007669"/>
    <property type="project" value="UniProtKB-KW"/>
</dbReference>
<dbReference type="GO" id="GO:0019843">
    <property type="term" value="F:rRNA binding"/>
    <property type="evidence" value="ECO:0007669"/>
    <property type="project" value="UniProtKB-UniRule"/>
</dbReference>
<dbReference type="GO" id="GO:0003735">
    <property type="term" value="F:structural constituent of ribosome"/>
    <property type="evidence" value="ECO:0000318"/>
    <property type="project" value="GO_Central"/>
</dbReference>
<dbReference type="GO" id="GO:0006412">
    <property type="term" value="P:translation"/>
    <property type="evidence" value="ECO:0007669"/>
    <property type="project" value="UniProtKB-UniRule"/>
</dbReference>
<dbReference type="FunFam" id="3.30.1370.30:FF:000002">
    <property type="entry name" value="30S ribosomal protein S8"/>
    <property type="match status" value="1"/>
</dbReference>
<dbReference type="FunFam" id="3.30.1490.10:FF:000001">
    <property type="entry name" value="30S ribosomal protein S8"/>
    <property type="match status" value="1"/>
</dbReference>
<dbReference type="Gene3D" id="3.30.1370.30">
    <property type="match status" value="1"/>
</dbReference>
<dbReference type="Gene3D" id="3.30.1490.10">
    <property type="match status" value="1"/>
</dbReference>
<dbReference type="HAMAP" id="MF_01302_B">
    <property type="entry name" value="Ribosomal_uS8_B"/>
    <property type="match status" value="1"/>
</dbReference>
<dbReference type="InterPro" id="IPR000630">
    <property type="entry name" value="Ribosomal_uS8"/>
</dbReference>
<dbReference type="InterPro" id="IPR047863">
    <property type="entry name" value="Ribosomal_uS8_CS"/>
</dbReference>
<dbReference type="InterPro" id="IPR035987">
    <property type="entry name" value="Ribosomal_uS8_sf"/>
</dbReference>
<dbReference type="NCBIfam" id="NF001109">
    <property type="entry name" value="PRK00136.1"/>
    <property type="match status" value="1"/>
</dbReference>
<dbReference type="PANTHER" id="PTHR11758">
    <property type="entry name" value="40S RIBOSOMAL PROTEIN S15A"/>
    <property type="match status" value="1"/>
</dbReference>
<dbReference type="Pfam" id="PF00410">
    <property type="entry name" value="Ribosomal_S8"/>
    <property type="match status" value="1"/>
</dbReference>
<dbReference type="SUPFAM" id="SSF56047">
    <property type="entry name" value="Ribosomal protein S8"/>
    <property type="match status" value="1"/>
</dbReference>
<dbReference type="PROSITE" id="PS00053">
    <property type="entry name" value="RIBOSOMAL_S8"/>
    <property type="match status" value="1"/>
</dbReference>
<comment type="function">
    <text evidence="1">One of the primary rRNA binding proteins, it binds directly to 16S rRNA central domain where it helps coordinate assembly of the platform of the 30S subunit.</text>
</comment>
<comment type="subunit">
    <text evidence="1">Part of the 30S ribosomal subunit.</text>
</comment>
<comment type="subcellular location">
    <subcellularLocation>
        <location>Plastid</location>
        <location>Chloroplast</location>
    </subcellularLocation>
</comment>
<comment type="similarity">
    <text evidence="2">Belongs to the universal ribosomal protein uS8 family.</text>
</comment>
<gene>
    <name type="primary">rps8</name>
</gene>
<sequence length="132" mass="15015">MGNDTIANMITSIRNANLEKTKTVQVPATNITKNIGKILLQEGFIENFREHEESKNCFLIFTLKYQGKKKKPYITTLRRISKPGLRIYSNHKEIPKVLGGMGIVILSTSEGIMTDREAREKKIGGEILCYVW</sequence>
<evidence type="ECO:0000250" key="1"/>
<evidence type="ECO:0000305" key="2"/>
<organism>
    <name type="scientific">Physcomitrium patens</name>
    <name type="common">Spreading-leaved earth moss</name>
    <name type="synonym">Physcomitrella patens</name>
    <dbReference type="NCBI Taxonomy" id="3218"/>
    <lineage>
        <taxon>Eukaryota</taxon>
        <taxon>Viridiplantae</taxon>
        <taxon>Streptophyta</taxon>
        <taxon>Embryophyta</taxon>
        <taxon>Bryophyta</taxon>
        <taxon>Bryophytina</taxon>
        <taxon>Bryopsida</taxon>
        <taxon>Funariidae</taxon>
        <taxon>Funariales</taxon>
        <taxon>Funariaceae</taxon>
        <taxon>Physcomitrium</taxon>
    </lineage>
</organism>
<protein>
    <recommendedName>
        <fullName evidence="2">Small ribosomal subunit protein uS8c</fullName>
    </recommendedName>
    <alternativeName>
        <fullName>30S ribosomal protein S8, chloroplastic</fullName>
    </alternativeName>
</protein>
<geneLocation type="chloroplast"/>